<comment type="function">
    <text evidence="1">With S4 and S12 plays an important role in translational accuracy.</text>
</comment>
<comment type="function">
    <text evidence="1">Located at the back of the 30S subunit body where it stabilizes the conformation of the head with respect to the body.</text>
</comment>
<comment type="subunit">
    <text evidence="1">Part of the 30S ribosomal subunit. Contacts proteins S4 and S8.</text>
</comment>
<comment type="domain">
    <text>The N-terminal domain interacts with the head of the 30S subunit; the C-terminal domain interacts with the body and contacts protein S4. The interaction surface between S4 and S5 is involved in control of translational fidelity.</text>
</comment>
<comment type="similarity">
    <text evidence="1">Belongs to the universal ribosomal protein uS5 family.</text>
</comment>
<sequence length="191" mass="20923">MAERDNRRGRRDDRDETPEFADRLVAINRVSKTVKGGKRFGFAALVVVGDQRGRVGFGKGKAKEVPEAIRKATEQAKRQMIRVPLREGRTLHHDIEGRHGAGKVMMRTAPQGTGIIAGGPMRAVFEMLGVQDVVAKSIGSQNPYNMIRATLDGLRKETSPRMVAQRRGKKVSDILKKDGEPAEAAAEPAEA</sequence>
<reference key="1">
    <citation type="journal article" date="2010" name="ISME J.">
        <title>The complete genome sequence of the algal symbiont Dinoroseobacter shibae: a hitchhiker's guide to life in the sea.</title>
        <authorList>
            <person name="Wagner-Dobler I."/>
            <person name="Ballhausen B."/>
            <person name="Berger M."/>
            <person name="Brinkhoff T."/>
            <person name="Buchholz I."/>
            <person name="Bunk B."/>
            <person name="Cypionka H."/>
            <person name="Daniel R."/>
            <person name="Drepper T."/>
            <person name="Gerdts G."/>
            <person name="Hahnke S."/>
            <person name="Han C."/>
            <person name="Jahn D."/>
            <person name="Kalhoefer D."/>
            <person name="Kiss H."/>
            <person name="Klenk H.P."/>
            <person name="Kyrpides N."/>
            <person name="Liebl W."/>
            <person name="Liesegang H."/>
            <person name="Meincke L."/>
            <person name="Pati A."/>
            <person name="Petersen J."/>
            <person name="Piekarski T."/>
            <person name="Pommerenke C."/>
            <person name="Pradella S."/>
            <person name="Pukall R."/>
            <person name="Rabus R."/>
            <person name="Stackebrandt E."/>
            <person name="Thole S."/>
            <person name="Thompson L."/>
            <person name="Tielen P."/>
            <person name="Tomasch J."/>
            <person name="von Jan M."/>
            <person name="Wanphrut N."/>
            <person name="Wichels A."/>
            <person name="Zech H."/>
            <person name="Simon M."/>
        </authorList>
    </citation>
    <scope>NUCLEOTIDE SEQUENCE [LARGE SCALE GENOMIC DNA]</scope>
    <source>
        <strain>DSM 16493 / NCIMB 14021 / DFL 12</strain>
    </source>
</reference>
<proteinExistence type="inferred from homology"/>
<dbReference type="EMBL" id="CP000830">
    <property type="protein sequence ID" value="ABV92051.1"/>
    <property type="molecule type" value="Genomic_DNA"/>
</dbReference>
<dbReference type="RefSeq" id="WP_012176981.1">
    <property type="nucleotide sequence ID" value="NC_009952.1"/>
</dbReference>
<dbReference type="SMR" id="A8LM74"/>
<dbReference type="STRING" id="398580.Dshi_0302"/>
<dbReference type="KEGG" id="dsh:Dshi_0302"/>
<dbReference type="eggNOG" id="COG0098">
    <property type="taxonomic scope" value="Bacteria"/>
</dbReference>
<dbReference type="HOGENOM" id="CLU_065898_2_2_5"/>
<dbReference type="OrthoDB" id="9809045at2"/>
<dbReference type="Proteomes" id="UP000006833">
    <property type="component" value="Chromosome"/>
</dbReference>
<dbReference type="GO" id="GO:0015935">
    <property type="term" value="C:small ribosomal subunit"/>
    <property type="evidence" value="ECO:0007669"/>
    <property type="project" value="InterPro"/>
</dbReference>
<dbReference type="GO" id="GO:0019843">
    <property type="term" value="F:rRNA binding"/>
    <property type="evidence" value="ECO:0007669"/>
    <property type="project" value="UniProtKB-UniRule"/>
</dbReference>
<dbReference type="GO" id="GO:0003735">
    <property type="term" value="F:structural constituent of ribosome"/>
    <property type="evidence" value="ECO:0007669"/>
    <property type="project" value="InterPro"/>
</dbReference>
<dbReference type="GO" id="GO:0006412">
    <property type="term" value="P:translation"/>
    <property type="evidence" value="ECO:0007669"/>
    <property type="project" value="UniProtKB-UniRule"/>
</dbReference>
<dbReference type="FunFam" id="3.30.160.20:FF:000001">
    <property type="entry name" value="30S ribosomal protein S5"/>
    <property type="match status" value="1"/>
</dbReference>
<dbReference type="FunFam" id="3.30.230.10:FF:000002">
    <property type="entry name" value="30S ribosomal protein S5"/>
    <property type="match status" value="1"/>
</dbReference>
<dbReference type="Gene3D" id="3.30.160.20">
    <property type="match status" value="1"/>
</dbReference>
<dbReference type="Gene3D" id="3.30.230.10">
    <property type="match status" value="1"/>
</dbReference>
<dbReference type="HAMAP" id="MF_01307_B">
    <property type="entry name" value="Ribosomal_uS5_B"/>
    <property type="match status" value="1"/>
</dbReference>
<dbReference type="InterPro" id="IPR020568">
    <property type="entry name" value="Ribosomal_Su5_D2-typ_SF"/>
</dbReference>
<dbReference type="InterPro" id="IPR000851">
    <property type="entry name" value="Ribosomal_uS5"/>
</dbReference>
<dbReference type="InterPro" id="IPR005712">
    <property type="entry name" value="Ribosomal_uS5_bac-type"/>
</dbReference>
<dbReference type="InterPro" id="IPR005324">
    <property type="entry name" value="Ribosomal_uS5_C"/>
</dbReference>
<dbReference type="InterPro" id="IPR013810">
    <property type="entry name" value="Ribosomal_uS5_N"/>
</dbReference>
<dbReference type="InterPro" id="IPR018192">
    <property type="entry name" value="Ribosomal_uS5_N_CS"/>
</dbReference>
<dbReference type="InterPro" id="IPR014721">
    <property type="entry name" value="Ribsml_uS5_D2-typ_fold_subgr"/>
</dbReference>
<dbReference type="NCBIfam" id="TIGR01021">
    <property type="entry name" value="rpsE_bact"/>
    <property type="match status" value="1"/>
</dbReference>
<dbReference type="PANTHER" id="PTHR48277">
    <property type="entry name" value="MITOCHONDRIAL RIBOSOMAL PROTEIN S5"/>
    <property type="match status" value="1"/>
</dbReference>
<dbReference type="PANTHER" id="PTHR48277:SF1">
    <property type="entry name" value="MITOCHONDRIAL RIBOSOMAL PROTEIN S5"/>
    <property type="match status" value="1"/>
</dbReference>
<dbReference type="Pfam" id="PF00333">
    <property type="entry name" value="Ribosomal_S5"/>
    <property type="match status" value="1"/>
</dbReference>
<dbReference type="Pfam" id="PF03719">
    <property type="entry name" value="Ribosomal_S5_C"/>
    <property type="match status" value="1"/>
</dbReference>
<dbReference type="SUPFAM" id="SSF54768">
    <property type="entry name" value="dsRNA-binding domain-like"/>
    <property type="match status" value="1"/>
</dbReference>
<dbReference type="SUPFAM" id="SSF54211">
    <property type="entry name" value="Ribosomal protein S5 domain 2-like"/>
    <property type="match status" value="1"/>
</dbReference>
<dbReference type="PROSITE" id="PS00585">
    <property type="entry name" value="RIBOSOMAL_S5"/>
    <property type="match status" value="1"/>
</dbReference>
<dbReference type="PROSITE" id="PS50881">
    <property type="entry name" value="S5_DSRBD"/>
    <property type="match status" value="1"/>
</dbReference>
<feature type="chain" id="PRO_1000086002" description="Small ribosomal subunit protein uS5">
    <location>
        <begin position="1"/>
        <end position="191"/>
    </location>
</feature>
<feature type="domain" description="S5 DRBM" evidence="1">
    <location>
        <begin position="20"/>
        <end position="83"/>
    </location>
</feature>
<feature type="region of interest" description="Disordered" evidence="2">
    <location>
        <begin position="158"/>
        <end position="191"/>
    </location>
</feature>
<feature type="compositionally biased region" description="Basic and acidic residues" evidence="2">
    <location>
        <begin position="170"/>
        <end position="180"/>
    </location>
</feature>
<feature type="compositionally biased region" description="Low complexity" evidence="2">
    <location>
        <begin position="182"/>
        <end position="191"/>
    </location>
</feature>
<accession>A8LM74</accession>
<protein>
    <recommendedName>
        <fullName evidence="1">Small ribosomal subunit protein uS5</fullName>
    </recommendedName>
    <alternativeName>
        <fullName evidence="3">30S ribosomal protein S5</fullName>
    </alternativeName>
</protein>
<gene>
    <name evidence="1" type="primary">rpsE</name>
    <name type="ordered locus">Dshi_0302</name>
</gene>
<name>RS5_DINSH</name>
<keyword id="KW-1185">Reference proteome</keyword>
<keyword id="KW-0687">Ribonucleoprotein</keyword>
<keyword id="KW-0689">Ribosomal protein</keyword>
<keyword id="KW-0694">RNA-binding</keyword>
<keyword id="KW-0699">rRNA-binding</keyword>
<evidence type="ECO:0000255" key="1">
    <source>
        <dbReference type="HAMAP-Rule" id="MF_01307"/>
    </source>
</evidence>
<evidence type="ECO:0000256" key="2">
    <source>
        <dbReference type="SAM" id="MobiDB-lite"/>
    </source>
</evidence>
<evidence type="ECO:0000305" key="3"/>
<organism>
    <name type="scientific">Dinoroseobacter shibae (strain DSM 16493 / NCIMB 14021 / DFL 12)</name>
    <dbReference type="NCBI Taxonomy" id="398580"/>
    <lineage>
        <taxon>Bacteria</taxon>
        <taxon>Pseudomonadati</taxon>
        <taxon>Pseudomonadota</taxon>
        <taxon>Alphaproteobacteria</taxon>
        <taxon>Rhodobacterales</taxon>
        <taxon>Roseobacteraceae</taxon>
        <taxon>Dinoroseobacter</taxon>
    </lineage>
</organism>